<accession>B7VJT3</accession>
<protein>
    <recommendedName>
        <fullName evidence="1">Peptidase B</fullName>
        <ecNumber evidence="1">3.4.11.23</ecNumber>
    </recommendedName>
    <alternativeName>
        <fullName evidence="1">Aminopeptidase B</fullName>
    </alternativeName>
</protein>
<sequence>MSTQMSVFLSQEAAQPQWGARAILSFSEAGATIHIGEGHDLGAVQRAGRTLDGQGIALVALSGKGWDLESVWAFYQGYRGPKKKNALEWDALAEADQVELEARIRATDWTRDIINKTAEEVAPRQLATMAAEYIKSVAPAGTVKAKIVKDKDLLTEGWEGIYAVGRGSERTSAMLQLDFNPTGDENAPVFACLVGKGITFDSGGYSIKPGQFMTAMKADMGGAATITGGLGLAIERGLNKRIKLILCCAENMISGRALKLGDIITYKNGKTVEIMNTDAEGRLVLADGLMFASAQNPELIIDCATLTGAAKNALGNDYHALLSFDDELSHQALTAANQEKEGLWPLPLADFHRGMLPSNFADLSNISSGDYTPGASTAAAFLSYFVDDYKKGWIHMDCAGTYRKSSSDKWAAGATGMGVRTLARLLIDQAK</sequence>
<name>PEPB_VIBA3</name>
<organism>
    <name type="scientific">Vibrio atlanticus (strain LGP32)</name>
    <name type="common">Vibrio splendidus (strain Mel32)</name>
    <dbReference type="NCBI Taxonomy" id="575788"/>
    <lineage>
        <taxon>Bacteria</taxon>
        <taxon>Pseudomonadati</taxon>
        <taxon>Pseudomonadota</taxon>
        <taxon>Gammaproteobacteria</taxon>
        <taxon>Vibrionales</taxon>
        <taxon>Vibrionaceae</taxon>
        <taxon>Vibrio</taxon>
    </lineage>
</organism>
<evidence type="ECO:0000255" key="1">
    <source>
        <dbReference type="HAMAP-Rule" id="MF_00504"/>
    </source>
</evidence>
<proteinExistence type="inferred from homology"/>
<feature type="chain" id="PRO_1000192733" description="Peptidase B">
    <location>
        <begin position="1"/>
        <end position="431"/>
    </location>
</feature>
<feature type="active site" evidence="1">
    <location>
        <position position="208"/>
    </location>
</feature>
<feature type="active site" evidence="1">
    <location>
        <position position="282"/>
    </location>
</feature>
<feature type="binding site" evidence="1">
    <location>
        <position position="196"/>
    </location>
    <ligand>
        <name>Mn(2+)</name>
        <dbReference type="ChEBI" id="CHEBI:29035"/>
        <label>2</label>
    </ligand>
</feature>
<feature type="binding site" evidence="1">
    <location>
        <position position="201"/>
    </location>
    <ligand>
        <name>Mn(2+)</name>
        <dbReference type="ChEBI" id="CHEBI:29035"/>
        <label>1</label>
    </ligand>
</feature>
<feature type="binding site" evidence="1">
    <location>
        <position position="201"/>
    </location>
    <ligand>
        <name>Mn(2+)</name>
        <dbReference type="ChEBI" id="CHEBI:29035"/>
        <label>2</label>
    </ligand>
</feature>
<feature type="binding site" evidence="1">
    <location>
        <position position="219"/>
    </location>
    <ligand>
        <name>Mn(2+)</name>
        <dbReference type="ChEBI" id="CHEBI:29035"/>
        <label>2</label>
    </ligand>
</feature>
<feature type="binding site" evidence="1">
    <location>
        <position position="278"/>
    </location>
    <ligand>
        <name>Mn(2+)</name>
        <dbReference type="ChEBI" id="CHEBI:29035"/>
        <label>1</label>
    </ligand>
</feature>
<feature type="binding site" evidence="1">
    <location>
        <position position="280"/>
    </location>
    <ligand>
        <name>Mn(2+)</name>
        <dbReference type="ChEBI" id="CHEBI:29035"/>
        <label>1</label>
    </ligand>
</feature>
<feature type="binding site" evidence="1">
    <location>
        <position position="280"/>
    </location>
    <ligand>
        <name>Mn(2+)</name>
        <dbReference type="ChEBI" id="CHEBI:29035"/>
        <label>2</label>
    </ligand>
</feature>
<dbReference type="EC" id="3.4.11.23" evidence="1"/>
<dbReference type="EMBL" id="FM954972">
    <property type="protein sequence ID" value="CAV17607.1"/>
    <property type="molecule type" value="Genomic_DNA"/>
</dbReference>
<dbReference type="SMR" id="B7VJT3"/>
<dbReference type="STRING" id="575788.VS_0614"/>
<dbReference type="MEROPS" id="M17.004"/>
<dbReference type="KEGG" id="vsp:VS_0614"/>
<dbReference type="eggNOG" id="COG0260">
    <property type="taxonomic scope" value="Bacteria"/>
</dbReference>
<dbReference type="HOGENOM" id="CLU_013734_7_1_6"/>
<dbReference type="Proteomes" id="UP000009100">
    <property type="component" value="Chromosome 1"/>
</dbReference>
<dbReference type="GO" id="GO:0005737">
    <property type="term" value="C:cytoplasm"/>
    <property type="evidence" value="ECO:0007669"/>
    <property type="project" value="UniProtKB-SubCell"/>
</dbReference>
<dbReference type="GO" id="GO:0030145">
    <property type="term" value="F:manganese ion binding"/>
    <property type="evidence" value="ECO:0007669"/>
    <property type="project" value="UniProtKB-UniRule"/>
</dbReference>
<dbReference type="GO" id="GO:0070006">
    <property type="term" value="F:metalloaminopeptidase activity"/>
    <property type="evidence" value="ECO:0007669"/>
    <property type="project" value="InterPro"/>
</dbReference>
<dbReference type="GO" id="GO:0006508">
    <property type="term" value="P:proteolysis"/>
    <property type="evidence" value="ECO:0007669"/>
    <property type="project" value="UniProtKB-UniRule"/>
</dbReference>
<dbReference type="CDD" id="cd00433">
    <property type="entry name" value="Peptidase_M17"/>
    <property type="match status" value="1"/>
</dbReference>
<dbReference type="FunFam" id="3.40.630.10:FF:000037">
    <property type="entry name" value="Peptidase B"/>
    <property type="match status" value="1"/>
</dbReference>
<dbReference type="Gene3D" id="3.40.630.10">
    <property type="entry name" value="Zn peptidases"/>
    <property type="match status" value="1"/>
</dbReference>
<dbReference type="HAMAP" id="MF_00504">
    <property type="entry name" value="Aminopeptidase_M17"/>
    <property type="match status" value="1"/>
</dbReference>
<dbReference type="InterPro" id="IPR011356">
    <property type="entry name" value="Leucine_aapep/pepB"/>
</dbReference>
<dbReference type="InterPro" id="IPR047620">
    <property type="entry name" value="M17_PepB-like_N"/>
</dbReference>
<dbReference type="InterPro" id="IPR008330">
    <property type="entry name" value="Pept_M17_PepB"/>
</dbReference>
<dbReference type="InterPro" id="IPR000819">
    <property type="entry name" value="Peptidase_M17_C"/>
</dbReference>
<dbReference type="NCBIfam" id="NF003450">
    <property type="entry name" value="PRK05015.1"/>
    <property type="match status" value="1"/>
</dbReference>
<dbReference type="PANTHER" id="PTHR11963">
    <property type="entry name" value="LEUCINE AMINOPEPTIDASE-RELATED"/>
    <property type="match status" value="1"/>
</dbReference>
<dbReference type="PANTHER" id="PTHR11963:SF20">
    <property type="entry name" value="PEPTIDASE B"/>
    <property type="match status" value="1"/>
</dbReference>
<dbReference type="Pfam" id="PF12404">
    <property type="entry name" value="DUF3663"/>
    <property type="match status" value="1"/>
</dbReference>
<dbReference type="Pfam" id="PF00883">
    <property type="entry name" value="Peptidase_M17"/>
    <property type="match status" value="1"/>
</dbReference>
<dbReference type="PIRSF" id="PIRSF036388">
    <property type="entry name" value="Ctsl_amnpptdse_B"/>
    <property type="match status" value="1"/>
</dbReference>
<dbReference type="PRINTS" id="PR00481">
    <property type="entry name" value="LAMNOPPTDASE"/>
</dbReference>
<dbReference type="SUPFAM" id="SSF53187">
    <property type="entry name" value="Zn-dependent exopeptidases"/>
    <property type="match status" value="1"/>
</dbReference>
<dbReference type="PROSITE" id="PS00631">
    <property type="entry name" value="CYTOSOL_AP"/>
    <property type="match status" value="1"/>
</dbReference>
<comment type="function">
    <text evidence="1">Probably plays an important role in intracellular peptide degradation.</text>
</comment>
<comment type="catalytic activity">
    <reaction evidence="1">
        <text>Release of an N-terminal amino acid, Xaa, from a peptide or arylamide. Xaa is preferably Glu or Asp but may be other amino acids, including Leu, Met, His, Cys and Gln.</text>
        <dbReference type="EC" id="3.4.11.23"/>
    </reaction>
</comment>
<comment type="cofactor">
    <cofactor evidence="1">
        <name>Mn(2+)</name>
        <dbReference type="ChEBI" id="CHEBI:29035"/>
    </cofactor>
    <text evidence="1">Binds 2 manganese ions per subunit.</text>
</comment>
<comment type="subunit">
    <text evidence="1">Homohexamer.</text>
</comment>
<comment type="subcellular location">
    <subcellularLocation>
        <location evidence="1">Cytoplasm</location>
    </subcellularLocation>
</comment>
<comment type="similarity">
    <text evidence="1">Belongs to the peptidase M17 family.</text>
</comment>
<gene>
    <name evidence="1" type="primary">pepB</name>
    <name type="ordered locus">VS_0614</name>
</gene>
<reference key="1">
    <citation type="submission" date="2009-02" db="EMBL/GenBank/DDBJ databases">
        <title>Vibrio splendidus str. LGP32 complete genome.</title>
        <authorList>
            <person name="Mazel D."/>
            <person name="Le Roux F."/>
        </authorList>
    </citation>
    <scope>NUCLEOTIDE SEQUENCE [LARGE SCALE GENOMIC DNA]</scope>
    <source>
        <strain>LGP32</strain>
    </source>
</reference>
<keyword id="KW-0031">Aminopeptidase</keyword>
<keyword id="KW-0963">Cytoplasm</keyword>
<keyword id="KW-0378">Hydrolase</keyword>
<keyword id="KW-0464">Manganese</keyword>
<keyword id="KW-0479">Metal-binding</keyword>
<keyword id="KW-0645">Protease</keyword>